<accession>Q6GDC6</accession>
<organism>
    <name type="scientific">Staphylococcus aureus (strain MRSA252)</name>
    <dbReference type="NCBI Taxonomy" id="282458"/>
    <lineage>
        <taxon>Bacteria</taxon>
        <taxon>Bacillati</taxon>
        <taxon>Bacillota</taxon>
        <taxon>Bacilli</taxon>
        <taxon>Bacillales</taxon>
        <taxon>Staphylococcaceae</taxon>
        <taxon>Staphylococcus</taxon>
    </lineage>
</organism>
<proteinExistence type="inferred from homology"/>
<gene>
    <name evidence="1" type="primary">hisD</name>
    <name type="ordered locus">SAR2760</name>
</gene>
<name>HISX_STAAR</name>
<protein>
    <recommendedName>
        <fullName evidence="1">Histidinol dehydrogenase</fullName>
        <shortName evidence="1">HDH</shortName>
        <ecNumber evidence="1">1.1.1.23</ecNumber>
    </recommendedName>
</protein>
<dbReference type="EC" id="1.1.1.23" evidence="1"/>
<dbReference type="EMBL" id="BX571856">
    <property type="protein sequence ID" value="CAG41735.1"/>
    <property type="molecule type" value="Genomic_DNA"/>
</dbReference>
<dbReference type="SMR" id="Q6GDC6"/>
<dbReference type="KEGG" id="sar:SAR2760"/>
<dbReference type="HOGENOM" id="CLU_006732_3_3_9"/>
<dbReference type="UniPathway" id="UPA00031">
    <property type="reaction ID" value="UER00014"/>
</dbReference>
<dbReference type="Proteomes" id="UP000000596">
    <property type="component" value="Chromosome"/>
</dbReference>
<dbReference type="GO" id="GO:0005829">
    <property type="term" value="C:cytosol"/>
    <property type="evidence" value="ECO:0007669"/>
    <property type="project" value="TreeGrafter"/>
</dbReference>
<dbReference type="GO" id="GO:0004399">
    <property type="term" value="F:histidinol dehydrogenase activity"/>
    <property type="evidence" value="ECO:0007669"/>
    <property type="project" value="UniProtKB-UniRule"/>
</dbReference>
<dbReference type="GO" id="GO:0051287">
    <property type="term" value="F:NAD binding"/>
    <property type="evidence" value="ECO:0007669"/>
    <property type="project" value="InterPro"/>
</dbReference>
<dbReference type="GO" id="GO:0008270">
    <property type="term" value="F:zinc ion binding"/>
    <property type="evidence" value="ECO:0007669"/>
    <property type="project" value="UniProtKB-UniRule"/>
</dbReference>
<dbReference type="GO" id="GO:0000105">
    <property type="term" value="P:L-histidine biosynthetic process"/>
    <property type="evidence" value="ECO:0007669"/>
    <property type="project" value="UniProtKB-UniRule"/>
</dbReference>
<dbReference type="CDD" id="cd06572">
    <property type="entry name" value="Histidinol_dh"/>
    <property type="match status" value="1"/>
</dbReference>
<dbReference type="FunFam" id="3.40.50.1980:FF:000001">
    <property type="entry name" value="Histidinol dehydrogenase"/>
    <property type="match status" value="1"/>
</dbReference>
<dbReference type="FunFam" id="3.40.50.1980:FF:000026">
    <property type="entry name" value="Histidinol dehydrogenase"/>
    <property type="match status" value="1"/>
</dbReference>
<dbReference type="Gene3D" id="1.20.5.1300">
    <property type="match status" value="1"/>
</dbReference>
<dbReference type="Gene3D" id="3.40.50.1980">
    <property type="entry name" value="Nitrogenase molybdenum iron protein domain"/>
    <property type="match status" value="2"/>
</dbReference>
<dbReference type="HAMAP" id="MF_01024">
    <property type="entry name" value="HisD"/>
    <property type="match status" value="1"/>
</dbReference>
<dbReference type="InterPro" id="IPR016161">
    <property type="entry name" value="Ald_DH/histidinol_DH"/>
</dbReference>
<dbReference type="InterPro" id="IPR001692">
    <property type="entry name" value="Histidinol_DH_CS"/>
</dbReference>
<dbReference type="InterPro" id="IPR022695">
    <property type="entry name" value="Histidinol_DH_monofunct"/>
</dbReference>
<dbReference type="InterPro" id="IPR012131">
    <property type="entry name" value="Hstdl_DH"/>
</dbReference>
<dbReference type="NCBIfam" id="TIGR00069">
    <property type="entry name" value="hisD"/>
    <property type="match status" value="1"/>
</dbReference>
<dbReference type="NCBIfam" id="NF010343">
    <property type="entry name" value="PRK13770.1"/>
    <property type="match status" value="1"/>
</dbReference>
<dbReference type="PANTHER" id="PTHR21256:SF2">
    <property type="entry name" value="HISTIDINE BIOSYNTHESIS TRIFUNCTIONAL PROTEIN"/>
    <property type="match status" value="1"/>
</dbReference>
<dbReference type="PANTHER" id="PTHR21256">
    <property type="entry name" value="HISTIDINOL DEHYDROGENASE HDH"/>
    <property type="match status" value="1"/>
</dbReference>
<dbReference type="Pfam" id="PF00815">
    <property type="entry name" value="Histidinol_dh"/>
    <property type="match status" value="1"/>
</dbReference>
<dbReference type="PIRSF" id="PIRSF000099">
    <property type="entry name" value="Histidinol_dh"/>
    <property type="match status" value="1"/>
</dbReference>
<dbReference type="PRINTS" id="PR00083">
    <property type="entry name" value="HOLDHDRGNASE"/>
</dbReference>
<dbReference type="SUPFAM" id="SSF53720">
    <property type="entry name" value="ALDH-like"/>
    <property type="match status" value="1"/>
</dbReference>
<dbReference type="PROSITE" id="PS00611">
    <property type="entry name" value="HISOL_DEHYDROGENASE"/>
    <property type="match status" value="1"/>
</dbReference>
<reference key="1">
    <citation type="journal article" date="2004" name="Proc. Natl. Acad. Sci. U.S.A.">
        <title>Complete genomes of two clinical Staphylococcus aureus strains: evidence for the rapid evolution of virulence and drug resistance.</title>
        <authorList>
            <person name="Holden M.T.G."/>
            <person name="Feil E.J."/>
            <person name="Lindsay J.A."/>
            <person name="Peacock S.J."/>
            <person name="Day N.P.J."/>
            <person name="Enright M.C."/>
            <person name="Foster T.J."/>
            <person name="Moore C.E."/>
            <person name="Hurst L."/>
            <person name="Atkin R."/>
            <person name="Barron A."/>
            <person name="Bason N."/>
            <person name="Bentley S.D."/>
            <person name="Chillingworth C."/>
            <person name="Chillingworth T."/>
            <person name="Churcher C."/>
            <person name="Clark L."/>
            <person name="Corton C."/>
            <person name="Cronin A."/>
            <person name="Doggett J."/>
            <person name="Dowd L."/>
            <person name="Feltwell T."/>
            <person name="Hance Z."/>
            <person name="Harris B."/>
            <person name="Hauser H."/>
            <person name="Holroyd S."/>
            <person name="Jagels K."/>
            <person name="James K.D."/>
            <person name="Lennard N."/>
            <person name="Line A."/>
            <person name="Mayes R."/>
            <person name="Moule S."/>
            <person name="Mungall K."/>
            <person name="Ormond D."/>
            <person name="Quail M.A."/>
            <person name="Rabbinowitsch E."/>
            <person name="Rutherford K.M."/>
            <person name="Sanders M."/>
            <person name="Sharp S."/>
            <person name="Simmonds M."/>
            <person name="Stevens K."/>
            <person name="Whitehead S."/>
            <person name="Barrell B.G."/>
            <person name="Spratt B.G."/>
            <person name="Parkhill J."/>
        </authorList>
    </citation>
    <scope>NUCLEOTIDE SEQUENCE [LARGE SCALE GENOMIC DNA]</scope>
    <source>
        <strain>MRSA252</strain>
    </source>
</reference>
<comment type="function">
    <text evidence="1">Catalyzes the sequential NAD-dependent oxidations of L-histidinol to L-histidinaldehyde and then to L-histidine.</text>
</comment>
<comment type="catalytic activity">
    <reaction evidence="1">
        <text>L-histidinol + 2 NAD(+) + H2O = L-histidine + 2 NADH + 3 H(+)</text>
        <dbReference type="Rhea" id="RHEA:20641"/>
        <dbReference type="ChEBI" id="CHEBI:15377"/>
        <dbReference type="ChEBI" id="CHEBI:15378"/>
        <dbReference type="ChEBI" id="CHEBI:57540"/>
        <dbReference type="ChEBI" id="CHEBI:57595"/>
        <dbReference type="ChEBI" id="CHEBI:57699"/>
        <dbReference type="ChEBI" id="CHEBI:57945"/>
        <dbReference type="EC" id="1.1.1.23"/>
    </reaction>
</comment>
<comment type="cofactor">
    <cofactor evidence="1">
        <name>Zn(2+)</name>
        <dbReference type="ChEBI" id="CHEBI:29105"/>
    </cofactor>
    <text evidence="1">Binds 1 zinc ion per subunit.</text>
</comment>
<comment type="pathway">
    <text evidence="1">Amino-acid biosynthesis; L-histidine biosynthesis; L-histidine from 5-phospho-alpha-D-ribose 1-diphosphate: step 9/9.</text>
</comment>
<comment type="similarity">
    <text evidence="1">Belongs to the histidinol dehydrogenase family.</text>
</comment>
<sequence>MPMLNAQQFLNQFSLEAPLDESLYPIIRDICQEVKVHGDKALKMYNLTFDHTKTDHLEISHEQIKAAFDTLDEKTKQALQQSYERIKAYQESIKQMNQQLEESVECYEIYHPLESVGIYVPGGKASYPSTVLMTATLAQVAGVENIVVVTPPQPNGVSQEVLAACYITQVNQVFQVGGAQSIAALTYGTETIPKVDKIVGPGNQFVAYAKKYLFGQVGIDQIAGPTEIALIIDDTADLDAIVYDVFAQAEHDELARTYVISEDAQVLKDLESRIAKALPNVDRYDIVSKSIANQHYLIHASNFDEACHVMNTIAPEHASIQTVNPQPYIEKVKYVGALFIGHYSPEVIGDYVAGPSHVLPTNRTARFTNGLSVNDFLTRNTVIHLSKDTFDQIADSAQHIAHVEALYNHQQSILIRQS</sequence>
<evidence type="ECO:0000255" key="1">
    <source>
        <dbReference type="HAMAP-Rule" id="MF_01024"/>
    </source>
</evidence>
<keyword id="KW-0028">Amino-acid biosynthesis</keyword>
<keyword id="KW-0368">Histidine biosynthesis</keyword>
<keyword id="KW-0479">Metal-binding</keyword>
<keyword id="KW-0520">NAD</keyword>
<keyword id="KW-0560">Oxidoreductase</keyword>
<keyword id="KW-0862">Zinc</keyword>
<feature type="chain" id="PRO_0000135850" description="Histidinol dehydrogenase">
    <location>
        <begin position="1"/>
        <end position="418"/>
    </location>
</feature>
<feature type="active site" description="Proton acceptor" evidence="1">
    <location>
        <position position="316"/>
    </location>
</feature>
<feature type="active site" description="Proton acceptor" evidence="1">
    <location>
        <position position="317"/>
    </location>
</feature>
<feature type="binding site" evidence="1">
    <location>
        <position position="119"/>
    </location>
    <ligand>
        <name>NAD(+)</name>
        <dbReference type="ChEBI" id="CHEBI:57540"/>
    </ligand>
</feature>
<feature type="binding site" evidence="1">
    <location>
        <position position="180"/>
    </location>
    <ligand>
        <name>NAD(+)</name>
        <dbReference type="ChEBI" id="CHEBI:57540"/>
    </ligand>
</feature>
<feature type="binding site" evidence="1">
    <location>
        <position position="203"/>
    </location>
    <ligand>
        <name>NAD(+)</name>
        <dbReference type="ChEBI" id="CHEBI:57540"/>
    </ligand>
</feature>
<feature type="binding site" evidence="1">
    <location>
        <position position="226"/>
    </location>
    <ligand>
        <name>substrate</name>
    </ligand>
</feature>
<feature type="binding site" evidence="1">
    <location>
        <position position="248"/>
    </location>
    <ligand>
        <name>substrate</name>
    </ligand>
</feature>
<feature type="binding site" evidence="1">
    <location>
        <position position="248"/>
    </location>
    <ligand>
        <name>Zn(2+)</name>
        <dbReference type="ChEBI" id="CHEBI:29105"/>
    </ligand>
</feature>
<feature type="binding site" evidence="1">
    <location>
        <position position="251"/>
    </location>
    <ligand>
        <name>substrate</name>
    </ligand>
</feature>
<feature type="binding site" evidence="1">
    <location>
        <position position="251"/>
    </location>
    <ligand>
        <name>Zn(2+)</name>
        <dbReference type="ChEBI" id="CHEBI:29105"/>
    </ligand>
</feature>
<feature type="binding site" evidence="1">
    <location>
        <position position="317"/>
    </location>
    <ligand>
        <name>substrate</name>
    </ligand>
</feature>
<feature type="binding site" evidence="1">
    <location>
        <position position="350"/>
    </location>
    <ligand>
        <name>substrate</name>
    </ligand>
</feature>
<feature type="binding site" evidence="1">
    <location>
        <position position="350"/>
    </location>
    <ligand>
        <name>Zn(2+)</name>
        <dbReference type="ChEBI" id="CHEBI:29105"/>
    </ligand>
</feature>
<feature type="binding site" evidence="1">
    <location>
        <position position="404"/>
    </location>
    <ligand>
        <name>substrate</name>
    </ligand>
</feature>
<feature type="binding site" evidence="1">
    <location>
        <position position="409"/>
    </location>
    <ligand>
        <name>substrate</name>
    </ligand>
</feature>
<feature type="binding site" evidence="1">
    <location>
        <position position="409"/>
    </location>
    <ligand>
        <name>Zn(2+)</name>
        <dbReference type="ChEBI" id="CHEBI:29105"/>
    </ligand>
</feature>